<keyword id="KW-0068">Autocatalytic cleavage</keyword>
<keyword id="KW-0963">Cytoplasm</keyword>
<keyword id="KW-0210">Decarboxylase</keyword>
<keyword id="KW-0456">Lyase</keyword>
<keyword id="KW-0566">Pantothenate biosynthesis</keyword>
<keyword id="KW-0670">Pyruvate</keyword>
<keyword id="KW-1185">Reference proteome</keyword>
<keyword id="KW-0704">Schiff base</keyword>
<keyword id="KW-0865">Zymogen</keyword>
<protein>
    <recommendedName>
        <fullName evidence="1">Aspartate 1-decarboxylase</fullName>
        <ecNumber evidence="1">4.1.1.11</ecNumber>
    </recommendedName>
    <alternativeName>
        <fullName evidence="1">Aspartate alpha-decarboxylase</fullName>
    </alternativeName>
    <component>
        <recommendedName>
            <fullName evidence="1">Aspartate 1-decarboxylase beta chain</fullName>
        </recommendedName>
    </component>
    <component>
        <recommendedName>
            <fullName evidence="1">Aspartate 1-decarboxylase alpha chain</fullName>
        </recommendedName>
    </component>
</protein>
<comment type="function">
    <text evidence="1">Catalyzes the pyruvoyl-dependent decarboxylation of aspartate to produce beta-alanine.</text>
</comment>
<comment type="catalytic activity">
    <reaction evidence="1">
        <text>L-aspartate + H(+) = beta-alanine + CO2</text>
        <dbReference type="Rhea" id="RHEA:19497"/>
        <dbReference type="ChEBI" id="CHEBI:15378"/>
        <dbReference type="ChEBI" id="CHEBI:16526"/>
        <dbReference type="ChEBI" id="CHEBI:29991"/>
        <dbReference type="ChEBI" id="CHEBI:57966"/>
        <dbReference type="EC" id="4.1.1.11"/>
    </reaction>
</comment>
<comment type="cofactor">
    <cofactor evidence="1">
        <name>pyruvate</name>
        <dbReference type="ChEBI" id="CHEBI:15361"/>
    </cofactor>
    <text evidence="1">Binds 1 pyruvoyl group covalently per subunit.</text>
</comment>
<comment type="pathway">
    <text evidence="1">Cofactor biosynthesis; (R)-pantothenate biosynthesis; beta-alanine from L-aspartate: step 1/1.</text>
</comment>
<comment type="subunit">
    <text evidence="1">Heterooctamer of four alpha and four beta subunits.</text>
</comment>
<comment type="subcellular location">
    <subcellularLocation>
        <location evidence="1">Cytoplasm</location>
    </subcellularLocation>
</comment>
<comment type="PTM">
    <text evidence="1">Is synthesized initially as an inactive proenzyme, which is activated by self-cleavage at a specific serine bond to produce a beta-subunit with a hydroxyl group at its C-terminus and an alpha-subunit with a pyruvoyl group at its N-terminus.</text>
</comment>
<comment type="similarity">
    <text evidence="1">Belongs to the PanD family.</text>
</comment>
<accession>A1SSG7</accession>
<name>PAND_PSYIN</name>
<sequence>MKKTMLTGKLHQARVTHAELNYEGSCAIDQDLLEQAGILEYEQIEIYNIENGARFSTYAITGERGSKMISVNGAAARLAAVGDRVIICTYASLNAAEIVNHKPSLVYLDAQNNIVRTSKDVPVQVA</sequence>
<organism>
    <name type="scientific">Psychromonas ingrahamii (strain DSM 17664 / CCUG 51855 / 37)</name>
    <dbReference type="NCBI Taxonomy" id="357804"/>
    <lineage>
        <taxon>Bacteria</taxon>
        <taxon>Pseudomonadati</taxon>
        <taxon>Pseudomonadota</taxon>
        <taxon>Gammaproteobacteria</taxon>
        <taxon>Alteromonadales</taxon>
        <taxon>Psychromonadaceae</taxon>
        <taxon>Psychromonas</taxon>
    </lineage>
</organism>
<reference key="1">
    <citation type="journal article" date="2008" name="BMC Genomics">
        <title>Genomics of an extreme psychrophile, Psychromonas ingrahamii.</title>
        <authorList>
            <person name="Riley M."/>
            <person name="Staley J.T."/>
            <person name="Danchin A."/>
            <person name="Wang T.Z."/>
            <person name="Brettin T.S."/>
            <person name="Hauser L.J."/>
            <person name="Land M.L."/>
            <person name="Thompson L.S."/>
        </authorList>
    </citation>
    <scope>NUCLEOTIDE SEQUENCE [LARGE SCALE GENOMIC DNA]</scope>
    <source>
        <strain>DSM 17664 / CCUG 51855 / 37</strain>
    </source>
</reference>
<feature type="chain" id="PRO_0000307057" description="Aspartate 1-decarboxylase beta chain" evidence="1">
    <location>
        <begin position="1"/>
        <end position="24"/>
    </location>
</feature>
<feature type="chain" id="PRO_0000307058" description="Aspartate 1-decarboxylase alpha chain" evidence="1">
    <location>
        <begin position="25"/>
        <end position="126"/>
    </location>
</feature>
<feature type="active site" description="Schiff-base intermediate with substrate; via pyruvic acid" evidence="1">
    <location>
        <position position="25"/>
    </location>
</feature>
<feature type="active site" description="Proton donor" evidence="1">
    <location>
        <position position="58"/>
    </location>
</feature>
<feature type="binding site" evidence="1">
    <location>
        <position position="57"/>
    </location>
    <ligand>
        <name>substrate</name>
    </ligand>
</feature>
<feature type="binding site" evidence="1">
    <location>
        <begin position="73"/>
        <end position="75"/>
    </location>
    <ligand>
        <name>substrate</name>
    </ligand>
</feature>
<feature type="modified residue" description="Pyruvic acid (Ser)" evidence="1">
    <location>
        <position position="25"/>
    </location>
</feature>
<dbReference type="EC" id="4.1.1.11" evidence="1"/>
<dbReference type="EMBL" id="CP000510">
    <property type="protein sequence ID" value="ABM02432.1"/>
    <property type="molecule type" value="Genomic_DNA"/>
</dbReference>
<dbReference type="RefSeq" id="WP_011768991.1">
    <property type="nucleotide sequence ID" value="NC_008709.1"/>
</dbReference>
<dbReference type="SMR" id="A1SSG7"/>
<dbReference type="STRING" id="357804.Ping_0578"/>
<dbReference type="KEGG" id="pin:Ping_0578"/>
<dbReference type="eggNOG" id="COG0853">
    <property type="taxonomic scope" value="Bacteria"/>
</dbReference>
<dbReference type="HOGENOM" id="CLU_115305_2_1_6"/>
<dbReference type="OrthoDB" id="9803983at2"/>
<dbReference type="UniPathway" id="UPA00028">
    <property type="reaction ID" value="UER00002"/>
</dbReference>
<dbReference type="Proteomes" id="UP000000639">
    <property type="component" value="Chromosome"/>
</dbReference>
<dbReference type="GO" id="GO:0005829">
    <property type="term" value="C:cytosol"/>
    <property type="evidence" value="ECO:0007669"/>
    <property type="project" value="TreeGrafter"/>
</dbReference>
<dbReference type="GO" id="GO:0004068">
    <property type="term" value="F:aspartate 1-decarboxylase activity"/>
    <property type="evidence" value="ECO:0007669"/>
    <property type="project" value="UniProtKB-UniRule"/>
</dbReference>
<dbReference type="GO" id="GO:0006523">
    <property type="term" value="P:alanine biosynthetic process"/>
    <property type="evidence" value="ECO:0007669"/>
    <property type="project" value="InterPro"/>
</dbReference>
<dbReference type="GO" id="GO:0015940">
    <property type="term" value="P:pantothenate biosynthetic process"/>
    <property type="evidence" value="ECO:0007669"/>
    <property type="project" value="UniProtKB-UniRule"/>
</dbReference>
<dbReference type="CDD" id="cd06919">
    <property type="entry name" value="Asp_decarbox"/>
    <property type="match status" value="1"/>
</dbReference>
<dbReference type="Gene3D" id="2.40.40.20">
    <property type="match status" value="1"/>
</dbReference>
<dbReference type="HAMAP" id="MF_00446">
    <property type="entry name" value="PanD"/>
    <property type="match status" value="1"/>
</dbReference>
<dbReference type="InterPro" id="IPR009010">
    <property type="entry name" value="Asp_de-COase-like_dom_sf"/>
</dbReference>
<dbReference type="InterPro" id="IPR003190">
    <property type="entry name" value="Asp_decarbox"/>
</dbReference>
<dbReference type="NCBIfam" id="TIGR00223">
    <property type="entry name" value="panD"/>
    <property type="match status" value="1"/>
</dbReference>
<dbReference type="PANTHER" id="PTHR21012">
    <property type="entry name" value="ASPARTATE 1-DECARBOXYLASE"/>
    <property type="match status" value="1"/>
</dbReference>
<dbReference type="PANTHER" id="PTHR21012:SF0">
    <property type="entry name" value="ASPARTATE 1-DECARBOXYLASE"/>
    <property type="match status" value="1"/>
</dbReference>
<dbReference type="Pfam" id="PF02261">
    <property type="entry name" value="Asp_decarbox"/>
    <property type="match status" value="1"/>
</dbReference>
<dbReference type="PIRSF" id="PIRSF006246">
    <property type="entry name" value="Asp_decarbox"/>
    <property type="match status" value="1"/>
</dbReference>
<dbReference type="SUPFAM" id="SSF50692">
    <property type="entry name" value="ADC-like"/>
    <property type="match status" value="1"/>
</dbReference>
<gene>
    <name evidence="1" type="primary">panD</name>
    <name type="ordered locus">Ping_0578</name>
</gene>
<evidence type="ECO:0000255" key="1">
    <source>
        <dbReference type="HAMAP-Rule" id="MF_00446"/>
    </source>
</evidence>
<proteinExistence type="inferred from homology"/>